<accession>Q9AJ99</accession>
<accession>Q5SK04</accession>
<proteinExistence type="inferred from homology"/>
<reference key="1">
    <citation type="submission" date="2001-04" db="EMBL/GenBank/DDBJ databases">
        <title>Characterization of RecX protein from Thermus thermophilus HB8.</title>
        <authorList>
            <person name="Inoue M."/>
            <person name="Masui R."/>
            <person name="Inoue Y."/>
            <person name="Shibata T."/>
            <person name="Yokoyama S."/>
            <person name="Kuramitsu S."/>
        </authorList>
    </citation>
    <scope>NUCLEOTIDE SEQUENCE [GENOMIC DNA]</scope>
</reference>
<reference key="2">
    <citation type="submission" date="2004-11" db="EMBL/GenBank/DDBJ databases">
        <title>Complete genome sequence of Thermus thermophilus HB8.</title>
        <authorList>
            <person name="Masui R."/>
            <person name="Kurokawa K."/>
            <person name="Nakagawa N."/>
            <person name="Tokunaga F."/>
            <person name="Koyama Y."/>
            <person name="Shibata T."/>
            <person name="Oshima T."/>
            <person name="Yokoyama S."/>
            <person name="Yasunaga T."/>
            <person name="Kuramitsu S."/>
        </authorList>
    </citation>
    <scope>NUCLEOTIDE SEQUENCE [LARGE SCALE GENOMIC DNA]</scope>
    <source>
        <strain>ATCC 27634 / DSM 579 / HB8</strain>
    </source>
</reference>
<keyword id="KW-0963">Cytoplasm</keyword>
<keyword id="KW-1185">Reference proteome</keyword>
<name>RECX_THET8</name>
<protein>
    <recommendedName>
        <fullName>Regulatory protein RecX</fullName>
    </recommendedName>
</protein>
<organism>
    <name type="scientific">Thermus thermophilus (strain ATCC 27634 / DSM 579 / HB8)</name>
    <dbReference type="NCBI Taxonomy" id="300852"/>
    <lineage>
        <taxon>Bacteria</taxon>
        <taxon>Thermotogati</taxon>
        <taxon>Deinococcota</taxon>
        <taxon>Deinococci</taxon>
        <taxon>Thermales</taxon>
        <taxon>Thermaceae</taxon>
        <taxon>Thermus</taxon>
    </lineage>
</organism>
<sequence length="142" mass="16016">MGSEALAYALRLLARKGYSRAVLRAKLAARFGEAEAEAALGRLEAMGYLDDRAYARAFVETRARRYGPRKLRALLLARGVPEEVVEEVLPEARVEEALAVLRRYRHREDKARAVRFLEGRGFPLGVALEAWRLAQEEGEGYK</sequence>
<feature type="chain" id="PRO_0000162487" description="Regulatory protein RecX">
    <location>
        <begin position="1"/>
        <end position="142"/>
    </location>
</feature>
<evidence type="ECO:0000250" key="1"/>
<evidence type="ECO:0000305" key="2"/>
<comment type="function">
    <text evidence="1">Modulates RecA activity.</text>
</comment>
<comment type="subcellular location">
    <subcellularLocation>
        <location evidence="2">Cytoplasm</location>
    </subcellularLocation>
</comment>
<comment type="similarity">
    <text evidence="2">Belongs to the RecX family.</text>
</comment>
<dbReference type="EMBL" id="AB059835">
    <property type="protein sequence ID" value="BAB41071.1"/>
    <property type="molecule type" value="Genomic_DNA"/>
</dbReference>
<dbReference type="EMBL" id="AP008226">
    <property type="protein sequence ID" value="BAD70671.1"/>
    <property type="molecule type" value="Genomic_DNA"/>
</dbReference>
<dbReference type="RefSeq" id="WP_011228243.1">
    <property type="nucleotide sequence ID" value="NC_006461.1"/>
</dbReference>
<dbReference type="RefSeq" id="YP_144114.1">
    <property type="nucleotide sequence ID" value="NC_006461.1"/>
</dbReference>
<dbReference type="SMR" id="Q9AJ99"/>
<dbReference type="EnsemblBacteria" id="BAD70671">
    <property type="protein sequence ID" value="BAD70671"/>
    <property type="gene ID" value="BAD70671"/>
</dbReference>
<dbReference type="GeneID" id="3169991"/>
<dbReference type="KEGG" id="ttj:TTHA0848"/>
<dbReference type="PATRIC" id="fig|300852.9.peg.842"/>
<dbReference type="eggNOG" id="COG2137">
    <property type="taxonomic scope" value="Bacteria"/>
</dbReference>
<dbReference type="HOGENOM" id="CLU_066607_3_3_0"/>
<dbReference type="Proteomes" id="UP000000532">
    <property type="component" value="Chromosome"/>
</dbReference>
<dbReference type="GO" id="GO:0005737">
    <property type="term" value="C:cytoplasm"/>
    <property type="evidence" value="ECO:0007669"/>
    <property type="project" value="UniProtKB-SubCell"/>
</dbReference>
<dbReference type="GO" id="GO:0006282">
    <property type="term" value="P:regulation of DNA repair"/>
    <property type="evidence" value="ECO:0007669"/>
    <property type="project" value="UniProtKB-UniRule"/>
</dbReference>
<dbReference type="Gene3D" id="1.10.10.10">
    <property type="entry name" value="Winged helix-like DNA-binding domain superfamily/Winged helix DNA-binding domain"/>
    <property type="match status" value="2"/>
</dbReference>
<dbReference type="HAMAP" id="MF_01114">
    <property type="entry name" value="RecX"/>
    <property type="match status" value="1"/>
</dbReference>
<dbReference type="InterPro" id="IPR053926">
    <property type="entry name" value="RecX_HTH_1st"/>
</dbReference>
<dbReference type="InterPro" id="IPR053924">
    <property type="entry name" value="RecX_HTH_2nd"/>
</dbReference>
<dbReference type="InterPro" id="IPR003783">
    <property type="entry name" value="Regulatory_RecX"/>
</dbReference>
<dbReference type="InterPro" id="IPR036388">
    <property type="entry name" value="WH-like_DNA-bd_sf"/>
</dbReference>
<dbReference type="NCBIfam" id="NF001065">
    <property type="entry name" value="PRK00117.5-5"/>
    <property type="match status" value="1"/>
</dbReference>
<dbReference type="PANTHER" id="PTHR33602">
    <property type="entry name" value="REGULATORY PROTEIN RECX FAMILY PROTEIN"/>
    <property type="match status" value="1"/>
</dbReference>
<dbReference type="PANTHER" id="PTHR33602:SF1">
    <property type="entry name" value="REGULATORY PROTEIN RECX FAMILY PROTEIN"/>
    <property type="match status" value="1"/>
</dbReference>
<dbReference type="Pfam" id="PF21982">
    <property type="entry name" value="RecX_HTH1"/>
    <property type="match status" value="1"/>
</dbReference>
<dbReference type="Pfam" id="PF02631">
    <property type="entry name" value="RecX_HTH2"/>
    <property type="match status" value="1"/>
</dbReference>
<gene>
    <name type="primary">recX</name>
    <name type="ordered locus">TTHA0848</name>
</gene>